<dbReference type="EMBL" id="CR380959">
    <property type="protein sequence ID" value="CAG62797.1"/>
    <property type="molecule type" value="Genomic_DNA"/>
</dbReference>
<dbReference type="RefSeq" id="XP_449817.1">
    <property type="nucleotide sequence ID" value="XM_449817.1"/>
</dbReference>
<dbReference type="SMR" id="Q6FIX7"/>
<dbReference type="FunCoup" id="Q6FIX7">
    <property type="interactions" value="372"/>
</dbReference>
<dbReference type="STRING" id="284593.Q6FIX7"/>
<dbReference type="EnsemblFungi" id="CAGL0M10912g-T">
    <property type="protein sequence ID" value="CAGL0M10912g-T-p1"/>
    <property type="gene ID" value="CAGL0M10912g"/>
</dbReference>
<dbReference type="KEGG" id="cgr:2891384"/>
<dbReference type="CGD" id="CAL0136951">
    <property type="gene designation" value="CAGL0M10912g"/>
</dbReference>
<dbReference type="VEuPathDB" id="FungiDB:B1J91_M10912g"/>
<dbReference type="VEuPathDB" id="FungiDB:CAGL0M10912g"/>
<dbReference type="eggNOG" id="KOG3493">
    <property type="taxonomic scope" value="Eukaryota"/>
</dbReference>
<dbReference type="HOGENOM" id="CLU_156193_2_0_1"/>
<dbReference type="InParanoid" id="Q6FIX7"/>
<dbReference type="OMA" id="GMSLEMQ"/>
<dbReference type="Proteomes" id="UP000002428">
    <property type="component" value="Chromosome M"/>
</dbReference>
<dbReference type="GO" id="GO:0005737">
    <property type="term" value="C:cytoplasm"/>
    <property type="evidence" value="ECO:0007669"/>
    <property type="project" value="EnsemblFungi"/>
</dbReference>
<dbReference type="GO" id="GO:0005634">
    <property type="term" value="C:nucleus"/>
    <property type="evidence" value="ECO:0007669"/>
    <property type="project" value="EnsemblFungi"/>
</dbReference>
<dbReference type="GO" id="GO:0031386">
    <property type="term" value="F:protein tag activity"/>
    <property type="evidence" value="ECO:0007669"/>
    <property type="project" value="EnsemblFungi"/>
</dbReference>
<dbReference type="GO" id="GO:0000753">
    <property type="term" value="P:cell morphogenesis involved in conjugation with cellular fusion"/>
    <property type="evidence" value="ECO:0007669"/>
    <property type="project" value="EnsemblFungi"/>
</dbReference>
<dbReference type="GO" id="GO:0045292">
    <property type="term" value="P:mRNA cis splicing, via spliceosome"/>
    <property type="evidence" value="ECO:0007669"/>
    <property type="project" value="EnsemblFungi"/>
</dbReference>
<dbReference type="GO" id="GO:0033120">
    <property type="term" value="P:positive regulation of RNA splicing"/>
    <property type="evidence" value="ECO:0007669"/>
    <property type="project" value="EnsemblFungi"/>
</dbReference>
<dbReference type="GO" id="GO:0043687">
    <property type="term" value="P:post-translational protein modification"/>
    <property type="evidence" value="ECO:0007669"/>
    <property type="project" value="EnsemblFungi"/>
</dbReference>
<dbReference type="CDD" id="cd01791">
    <property type="entry name" value="Ubl_UBL5"/>
    <property type="match status" value="1"/>
</dbReference>
<dbReference type="FunFam" id="3.10.20.90:FF:000052">
    <property type="entry name" value="Ubiquitin-like protein 5"/>
    <property type="match status" value="1"/>
</dbReference>
<dbReference type="Gene3D" id="3.10.20.90">
    <property type="entry name" value="Phosphatidylinositol 3-kinase Catalytic Subunit, Chain A, domain 1"/>
    <property type="match status" value="1"/>
</dbReference>
<dbReference type="InterPro" id="IPR039732">
    <property type="entry name" value="Hub1/Ubl5"/>
</dbReference>
<dbReference type="InterPro" id="IPR000626">
    <property type="entry name" value="Ubiquitin-like_dom"/>
</dbReference>
<dbReference type="InterPro" id="IPR029071">
    <property type="entry name" value="Ubiquitin-like_domsf"/>
</dbReference>
<dbReference type="PANTHER" id="PTHR13042">
    <property type="entry name" value="UBIQUITIN-LIKE PROTEIN 5"/>
    <property type="match status" value="1"/>
</dbReference>
<dbReference type="Pfam" id="PF00240">
    <property type="entry name" value="ubiquitin"/>
    <property type="match status" value="1"/>
</dbReference>
<dbReference type="SMART" id="SM00213">
    <property type="entry name" value="UBQ"/>
    <property type="match status" value="1"/>
</dbReference>
<dbReference type="SUPFAM" id="SSF54236">
    <property type="entry name" value="Ubiquitin-like"/>
    <property type="match status" value="1"/>
</dbReference>
<dbReference type="PROSITE" id="PS50053">
    <property type="entry name" value="UBIQUITIN_2"/>
    <property type="match status" value="1"/>
</dbReference>
<accession>Q6FIX7</accession>
<protein>
    <recommendedName>
        <fullName>Ubiquitin-like modifier HUB1</fullName>
    </recommendedName>
</protein>
<gene>
    <name type="primary">HUB1</name>
    <name type="ordered locus">CAGL0M10912g</name>
</gene>
<feature type="chain" id="PRO_0000114875" description="Ubiquitin-like modifier HUB1">
    <location>
        <begin position="1"/>
        <end position="73"/>
    </location>
</feature>
<feature type="domain" description="Ubiquitin-like" evidence="1">
    <location>
        <begin position="1"/>
        <end position="73"/>
    </location>
</feature>
<name>HUB1_CANGA</name>
<evidence type="ECO:0000255" key="1">
    <source>
        <dbReference type="PROSITE-ProRule" id="PRU00214"/>
    </source>
</evidence>
<organism>
    <name type="scientific">Candida glabrata (strain ATCC 2001 / BCRC 20586 / JCM 3761 / NBRC 0622 / NRRL Y-65 / CBS 138)</name>
    <name type="common">Yeast</name>
    <name type="synonym">Nakaseomyces glabratus</name>
    <dbReference type="NCBI Taxonomy" id="284593"/>
    <lineage>
        <taxon>Eukaryota</taxon>
        <taxon>Fungi</taxon>
        <taxon>Dikarya</taxon>
        <taxon>Ascomycota</taxon>
        <taxon>Saccharomycotina</taxon>
        <taxon>Saccharomycetes</taxon>
        <taxon>Saccharomycetales</taxon>
        <taxon>Saccharomycetaceae</taxon>
        <taxon>Nakaseomyces</taxon>
    </lineage>
</organism>
<sequence length="73" mass="8355">MIEVLVNDRLGKKIRVKCLEDDTVGDFKKVLSVQLGMQPSKIVLQKGGSVLKDHITLYDYEVHDNTNLELYYS</sequence>
<reference key="1">
    <citation type="journal article" date="2004" name="Nature">
        <title>Genome evolution in yeasts.</title>
        <authorList>
            <person name="Dujon B."/>
            <person name="Sherman D."/>
            <person name="Fischer G."/>
            <person name="Durrens P."/>
            <person name="Casaregola S."/>
            <person name="Lafontaine I."/>
            <person name="de Montigny J."/>
            <person name="Marck C."/>
            <person name="Neuveglise C."/>
            <person name="Talla E."/>
            <person name="Goffard N."/>
            <person name="Frangeul L."/>
            <person name="Aigle M."/>
            <person name="Anthouard V."/>
            <person name="Babour A."/>
            <person name="Barbe V."/>
            <person name="Barnay S."/>
            <person name="Blanchin S."/>
            <person name="Beckerich J.-M."/>
            <person name="Beyne E."/>
            <person name="Bleykasten C."/>
            <person name="Boisrame A."/>
            <person name="Boyer J."/>
            <person name="Cattolico L."/>
            <person name="Confanioleri F."/>
            <person name="de Daruvar A."/>
            <person name="Despons L."/>
            <person name="Fabre E."/>
            <person name="Fairhead C."/>
            <person name="Ferry-Dumazet H."/>
            <person name="Groppi A."/>
            <person name="Hantraye F."/>
            <person name="Hennequin C."/>
            <person name="Jauniaux N."/>
            <person name="Joyet P."/>
            <person name="Kachouri R."/>
            <person name="Kerrest A."/>
            <person name="Koszul R."/>
            <person name="Lemaire M."/>
            <person name="Lesur I."/>
            <person name="Ma L."/>
            <person name="Muller H."/>
            <person name="Nicaud J.-M."/>
            <person name="Nikolski M."/>
            <person name="Oztas S."/>
            <person name="Ozier-Kalogeropoulos O."/>
            <person name="Pellenz S."/>
            <person name="Potier S."/>
            <person name="Richard G.-F."/>
            <person name="Straub M.-L."/>
            <person name="Suleau A."/>
            <person name="Swennen D."/>
            <person name="Tekaia F."/>
            <person name="Wesolowski-Louvel M."/>
            <person name="Westhof E."/>
            <person name="Wirth B."/>
            <person name="Zeniou-Meyer M."/>
            <person name="Zivanovic Y."/>
            <person name="Bolotin-Fukuhara M."/>
            <person name="Thierry A."/>
            <person name="Bouchier C."/>
            <person name="Caudron B."/>
            <person name="Scarpelli C."/>
            <person name="Gaillardin C."/>
            <person name="Weissenbach J."/>
            <person name="Wincker P."/>
            <person name="Souciet J.-L."/>
        </authorList>
    </citation>
    <scope>NUCLEOTIDE SEQUENCE [LARGE SCALE GENOMIC DNA]</scope>
    <source>
        <strain>ATCC 2001 / BCRC 20586 / JCM 3761 / NBRC 0622 / NRRL Y-65 / CBS 138</strain>
    </source>
</reference>
<keyword id="KW-1185">Reference proteome</keyword>
<keyword id="KW-0833">Ubl conjugation pathway</keyword>
<proteinExistence type="predicted"/>